<reference key="1">
    <citation type="journal article" date="2005" name="Nature">
        <title>Sequencing of Aspergillus nidulans and comparative analysis with A. fumigatus and A. oryzae.</title>
        <authorList>
            <person name="Galagan J.E."/>
            <person name="Calvo S.E."/>
            <person name="Cuomo C."/>
            <person name="Ma L.-J."/>
            <person name="Wortman J.R."/>
            <person name="Batzoglou S."/>
            <person name="Lee S.-I."/>
            <person name="Bastuerkmen M."/>
            <person name="Spevak C.C."/>
            <person name="Clutterbuck J."/>
            <person name="Kapitonov V."/>
            <person name="Jurka J."/>
            <person name="Scazzocchio C."/>
            <person name="Farman M.L."/>
            <person name="Butler J."/>
            <person name="Purcell S."/>
            <person name="Harris S."/>
            <person name="Braus G.H."/>
            <person name="Draht O."/>
            <person name="Busch S."/>
            <person name="D'Enfert C."/>
            <person name="Bouchier C."/>
            <person name="Goldman G.H."/>
            <person name="Bell-Pedersen D."/>
            <person name="Griffiths-Jones S."/>
            <person name="Doonan J.H."/>
            <person name="Yu J."/>
            <person name="Vienken K."/>
            <person name="Pain A."/>
            <person name="Freitag M."/>
            <person name="Selker E.U."/>
            <person name="Archer D.B."/>
            <person name="Penalva M.A."/>
            <person name="Oakley B.R."/>
            <person name="Momany M."/>
            <person name="Tanaka T."/>
            <person name="Kumagai T."/>
            <person name="Asai K."/>
            <person name="Machida M."/>
            <person name="Nierman W.C."/>
            <person name="Denning D.W."/>
            <person name="Caddick M.X."/>
            <person name="Hynes M."/>
            <person name="Paoletti M."/>
            <person name="Fischer R."/>
            <person name="Miller B.L."/>
            <person name="Dyer P.S."/>
            <person name="Sachs M.S."/>
            <person name="Osmani S.A."/>
            <person name="Birren B.W."/>
        </authorList>
    </citation>
    <scope>NUCLEOTIDE SEQUENCE [LARGE SCALE GENOMIC DNA]</scope>
    <source>
        <strain>FGSC A4 / ATCC 38163 / CBS 112.46 / NRRL 194 / M139</strain>
    </source>
</reference>
<reference key="2">
    <citation type="journal article" date="2009" name="Fungal Genet. Biol.">
        <title>The 2008 update of the Aspergillus nidulans genome annotation: a community effort.</title>
        <authorList>
            <person name="Wortman J.R."/>
            <person name="Gilsenan J.M."/>
            <person name="Joardar V."/>
            <person name="Deegan J."/>
            <person name="Clutterbuck J."/>
            <person name="Andersen M.R."/>
            <person name="Archer D."/>
            <person name="Bencina M."/>
            <person name="Braus G."/>
            <person name="Coutinho P."/>
            <person name="von Dohren H."/>
            <person name="Doonan J."/>
            <person name="Driessen A.J."/>
            <person name="Durek P."/>
            <person name="Espeso E."/>
            <person name="Fekete E."/>
            <person name="Flipphi M."/>
            <person name="Estrada C.G."/>
            <person name="Geysens S."/>
            <person name="Goldman G."/>
            <person name="de Groot P.W."/>
            <person name="Hansen K."/>
            <person name="Harris S.D."/>
            <person name="Heinekamp T."/>
            <person name="Helmstaedt K."/>
            <person name="Henrissat B."/>
            <person name="Hofmann G."/>
            <person name="Homan T."/>
            <person name="Horio T."/>
            <person name="Horiuchi H."/>
            <person name="James S."/>
            <person name="Jones M."/>
            <person name="Karaffa L."/>
            <person name="Karanyi Z."/>
            <person name="Kato M."/>
            <person name="Keller N."/>
            <person name="Kelly D.E."/>
            <person name="Kiel J.A."/>
            <person name="Kim J.M."/>
            <person name="van der Klei I.J."/>
            <person name="Klis F.M."/>
            <person name="Kovalchuk A."/>
            <person name="Krasevec N."/>
            <person name="Kubicek C.P."/>
            <person name="Liu B."/>
            <person name="Maccabe A."/>
            <person name="Meyer V."/>
            <person name="Mirabito P."/>
            <person name="Miskei M."/>
            <person name="Mos M."/>
            <person name="Mullins J."/>
            <person name="Nelson D.R."/>
            <person name="Nielsen J."/>
            <person name="Oakley B.R."/>
            <person name="Osmani S.A."/>
            <person name="Pakula T."/>
            <person name="Paszewski A."/>
            <person name="Paulsen I."/>
            <person name="Pilsyk S."/>
            <person name="Pocsi I."/>
            <person name="Punt P.J."/>
            <person name="Ram A.F."/>
            <person name="Ren Q."/>
            <person name="Robellet X."/>
            <person name="Robson G."/>
            <person name="Seiboth B."/>
            <person name="van Solingen P."/>
            <person name="Specht T."/>
            <person name="Sun J."/>
            <person name="Taheri-Talesh N."/>
            <person name="Takeshita N."/>
            <person name="Ussery D."/>
            <person name="vanKuyk P.A."/>
            <person name="Visser H."/>
            <person name="van de Vondervoort P.J."/>
            <person name="de Vries R.P."/>
            <person name="Walton J."/>
            <person name="Xiang X."/>
            <person name="Xiong Y."/>
            <person name="Zeng A.P."/>
            <person name="Brandt B.W."/>
            <person name="Cornell M.J."/>
            <person name="van den Hondel C.A."/>
            <person name="Visser J."/>
            <person name="Oliver S.G."/>
            <person name="Turner G."/>
        </authorList>
    </citation>
    <scope>GENOME REANNOTATION</scope>
    <source>
        <strain>FGSC A4 / ATCC 38163 / CBS 112.46 / NRRL 194 / M139</strain>
    </source>
</reference>
<reference key="3">
    <citation type="journal article" date="2012" name="J. Am. Chem. Soc.">
        <title>Illuminating the diversity of aromatic polyketide synthases in Aspergillus nidulans.</title>
        <authorList>
            <person name="Ahuja M."/>
            <person name="Chiang Y.M."/>
            <person name="Chang S.L."/>
            <person name="Praseuth M.B."/>
            <person name="Entwistle R."/>
            <person name="Sanchez J.F."/>
            <person name="Lo H.C."/>
            <person name="Yeh H.H."/>
            <person name="Oakley B.R."/>
            <person name="Wang C.C."/>
        </authorList>
    </citation>
    <scope>FUNCTION</scope>
</reference>
<reference key="4">
    <citation type="journal article" date="2013" name="Org. Lett.">
        <title>Molecular genetic characterization of the biosynthesis cluster of a prenylated isoindolinone alkaloid aspernidine A in Aspergillus nidulans.</title>
        <authorList>
            <person name="Yaegashi J."/>
            <person name="Praseuth M.B."/>
            <person name="Tyan S.W."/>
            <person name="Sanchez J.F."/>
            <person name="Entwistle R."/>
            <person name="Chiang Y.M."/>
            <person name="Oakley B.R."/>
            <person name="Wang C.C."/>
        </authorList>
    </citation>
    <scope>IDENTIFICATION</scope>
    <scope>DISRUPTION PHENOTYPE</scope>
    <scope>FUNCTION</scope>
    <scope>PATHWAY</scope>
</reference>
<reference key="5">
    <citation type="journal article" date="2015" name="Genetics">
        <title>Beyond asexual development: modifications in the gene expression profile caused by the absence of the Aspergillus nidulans transcription factor FlbB.</title>
        <authorList>
            <person name="Oiartzabal-Arano E."/>
            <person name="Garzia A."/>
            <person name="Gorostidi A."/>
            <person name="Ugalde U."/>
            <person name="Espeso E.A."/>
            <person name="Etxebeste O."/>
        </authorList>
    </citation>
    <scope>INDUCTION</scope>
</reference>
<sequence>MVFGSRPPALTEANIGDQSGKVFIVTGATSGYGLLLSTYLYQNNGTVYLAARNAKKTAEVIADLKQRFPASRGRLDSISLNLSDLSTIKKSAEEFLAKETRLHVLWNNAGVMFPPAGSTTSQGYELQLGTNNVGPHLFTKLLYPTLAATAKEAPKNTVRVVWVSSDAASWAPKPAIDFNNLDYRRNESDRSKYGRSKAGTVMQAVELARRARKDGSGIVSIALDPGIANTGLQRDMGRLMSTMVKLIANKPEIGAYTQLFAGLSPEITAEVAEKEWVVPPGKIGCPRRDLFTDTETSRKWWEWNEEQVKAYL</sequence>
<keyword id="KW-0521">NADP</keyword>
<keyword id="KW-0560">Oxidoreductase</keyword>
<keyword id="KW-1185">Reference proteome</keyword>
<proteinExistence type="evidence at transcript level"/>
<feature type="chain" id="PRO_0000446361" description="Short-chain dehydrogenase/reductase pkfC">
    <location>
        <begin position="1"/>
        <end position="312"/>
    </location>
</feature>
<feature type="active site" description="Proton donor" evidence="2">
    <location>
        <position position="164"/>
    </location>
</feature>
<feature type="active site" description="Proton acceptor" evidence="3">
    <location>
        <position position="193"/>
    </location>
</feature>
<feature type="active site" description="Lowers pKa of active site Tyr" evidence="2">
    <location>
        <position position="197"/>
    </location>
</feature>
<feature type="binding site" evidence="1">
    <location>
        <position position="56"/>
    </location>
    <ligand>
        <name>NADP(+)</name>
        <dbReference type="ChEBI" id="CHEBI:58349"/>
    </ligand>
</feature>
<feature type="binding site" evidence="2">
    <location>
        <position position="108"/>
    </location>
    <ligand>
        <name>NADP(+)</name>
        <dbReference type="ChEBI" id="CHEBI:58349"/>
    </ligand>
</feature>
<feature type="binding site" evidence="1">
    <location>
        <position position="140"/>
    </location>
    <ligand>
        <name>NADP(+)</name>
        <dbReference type="ChEBI" id="CHEBI:58349"/>
    </ligand>
</feature>
<feature type="binding site" evidence="2">
    <location>
        <position position="193"/>
    </location>
    <ligand>
        <name>NADP(+)</name>
        <dbReference type="ChEBI" id="CHEBI:58349"/>
    </ligand>
</feature>
<feature type="binding site" evidence="2">
    <location>
        <position position="197"/>
    </location>
    <ligand>
        <name>NADP(+)</name>
        <dbReference type="ChEBI" id="CHEBI:58349"/>
    </ligand>
</feature>
<gene>
    <name evidence="6" type="primary">pkfC</name>
    <name type="ORF">ANIA_03226</name>
</gene>
<organism>
    <name type="scientific">Emericella nidulans (strain FGSC A4 / ATCC 38163 / CBS 112.46 / NRRL 194 / M139)</name>
    <name type="common">Aspergillus nidulans</name>
    <dbReference type="NCBI Taxonomy" id="227321"/>
    <lineage>
        <taxon>Eukaryota</taxon>
        <taxon>Fungi</taxon>
        <taxon>Dikarya</taxon>
        <taxon>Ascomycota</taxon>
        <taxon>Pezizomycotina</taxon>
        <taxon>Eurotiomycetes</taxon>
        <taxon>Eurotiomycetidae</taxon>
        <taxon>Eurotiales</taxon>
        <taxon>Aspergillaceae</taxon>
        <taxon>Aspergillus</taxon>
        <taxon>Aspergillus subgen. Nidulantes</taxon>
    </lineage>
</organism>
<protein>
    <recommendedName>
        <fullName evidence="6">Short-chain dehydrogenase/reductase pkfC</fullName>
        <ecNumber evidence="8">1.1.1.-</ecNumber>
    </recommendedName>
    <alternativeName>
        <fullName evidence="6">Aspernidine A biosynthesis cluster protein pkfC</fullName>
    </alternativeName>
</protein>
<evidence type="ECO:0000250" key="1">
    <source>
        <dbReference type="UniProtKB" id="L0E2Z4"/>
    </source>
</evidence>
<evidence type="ECO:0000250" key="2">
    <source>
        <dbReference type="UniProtKB" id="O93868"/>
    </source>
</evidence>
<evidence type="ECO:0000255" key="3">
    <source>
        <dbReference type="PROSITE-ProRule" id="PRU10001"/>
    </source>
</evidence>
<evidence type="ECO:0000269" key="4">
    <source>
    </source>
</evidence>
<evidence type="ECO:0000269" key="5">
    <source>
    </source>
</evidence>
<evidence type="ECO:0000303" key="6">
    <source>
    </source>
</evidence>
<evidence type="ECO:0000305" key="7"/>
<evidence type="ECO:0000305" key="8">
    <source>
    </source>
</evidence>
<comment type="function">
    <text evidence="4 5 8">Short-chain dehydrogenase/reductase; part of the gene cluster that mediates the biosynthesis of aspernidine A, a prenylated isoindolinone (PubMed:23706169). The starting point of the biosynthesis of aspernidin A is the production of orsellinaldehyde by the non-reducing polyketide synthase pkfA (PubMed:22510154). Hydroxylation, methylation of one of the phenol groups, and prenylation, presumably catalyzed by the prenyltransferase pkfE, would be needed to yield aspernidine D (Probable). Subsequently, the cytochrome P450 monooxygenase pkfB is responsible for hydroxylation of aspernidine D to yield aspernidine E (PubMed:23706169). The dehydrogenase pkfF may be responsible for further oxidation of aspernidine E to form a dialdehyde intermediate which is further transformed in a series of steps, some of which are enzyme-mediated, to generate aspernidine A (Probable). The possibility that additional enzymes outside of the cluster are involved in aspernidine A biosynthesis cannot be excluded (Probable).</text>
</comment>
<comment type="pathway">
    <text evidence="5">Secondary metabolite biosynthesis.</text>
</comment>
<comment type="disruption phenotype">
    <text evidence="5">Abolishes the production of Aspernidine A.</text>
</comment>
<comment type="similarity">
    <text evidence="7">Belongs to the short-chain dehydrogenases/reductases (SDR) family.</text>
</comment>
<comment type="sequence caution" evidence="7">
    <conflict type="erroneous gene model prediction">
        <sequence resource="EMBL-CDS" id="EAA63127"/>
    </conflict>
</comment>
<name>PKFC_EMENI</name>
<dbReference type="EC" id="1.1.1.-" evidence="8"/>
<dbReference type="EMBL" id="AACD01000054">
    <property type="protein sequence ID" value="EAA63127.1"/>
    <property type="status" value="ALT_SEQ"/>
    <property type="molecule type" value="Genomic_DNA"/>
</dbReference>
<dbReference type="EMBL" id="BN001306">
    <property type="protein sequence ID" value="CBF83147.1"/>
    <property type="molecule type" value="Genomic_DNA"/>
</dbReference>
<dbReference type="RefSeq" id="XP_660830.1">
    <property type="nucleotide sequence ID" value="XM_655738.1"/>
</dbReference>
<dbReference type="SMR" id="C8VI80"/>
<dbReference type="STRING" id="227321.C8VI80"/>
<dbReference type="EnsemblFungi" id="CBF83147">
    <property type="protein sequence ID" value="CBF83147"/>
    <property type="gene ID" value="ANIA_03226"/>
</dbReference>
<dbReference type="VEuPathDB" id="FungiDB:AN3226"/>
<dbReference type="eggNOG" id="KOG1208">
    <property type="taxonomic scope" value="Eukaryota"/>
</dbReference>
<dbReference type="HOGENOM" id="CLU_010194_44_6_1"/>
<dbReference type="InParanoid" id="C8VI80"/>
<dbReference type="OMA" id="FNPGNLQ"/>
<dbReference type="OrthoDB" id="191139at2759"/>
<dbReference type="Proteomes" id="UP000000560">
    <property type="component" value="Chromosome VI"/>
</dbReference>
<dbReference type="GO" id="GO:0016491">
    <property type="term" value="F:oxidoreductase activity"/>
    <property type="evidence" value="ECO:0007669"/>
    <property type="project" value="UniProtKB-KW"/>
</dbReference>
<dbReference type="GO" id="GO:0097308">
    <property type="term" value="P:cellular response to farnesol"/>
    <property type="evidence" value="ECO:0000270"/>
    <property type="project" value="AspGD"/>
</dbReference>
<dbReference type="GO" id="GO:0044550">
    <property type="term" value="P:secondary metabolite biosynthetic process"/>
    <property type="evidence" value="ECO:0000315"/>
    <property type="project" value="AspGD"/>
</dbReference>
<dbReference type="FunFam" id="3.40.50.720:FF:001499">
    <property type="entry name" value="Short-chain dehydrogenase/reductase pkfC"/>
    <property type="match status" value="1"/>
</dbReference>
<dbReference type="Gene3D" id="3.40.50.720">
    <property type="entry name" value="NAD(P)-binding Rossmann-like Domain"/>
    <property type="match status" value="1"/>
</dbReference>
<dbReference type="InterPro" id="IPR036291">
    <property type="entry name" value="NAD(P)-bd_dom_sf"/>
</dbReference>
<dbReference type="InterPro" id="IPR002347">
    <property type="entry name" value="SDR_fam"/>
</dbReference>
<dbReference type="PANTHER" id="PTHR24320">
    <property type="entry name" value="RETINOL DEHYDROGENASE"/>
    <property type="match status" value="1"/>
</dbReference>
<dbReference type="PANTHER" id="PTHR24320:SF236">
    <property type="entry name" value="SHORT-CHAIN DEHYDROGENASE-RELATED"/>
    <property type="match status" value="1"/>
</dbReference>
<dbReference type="Pfam" id="PF00106">
    <property type="entry name" value="adh_short"/>
    <property type="match status" value="1"/>
</dbReference>
<dbReference type="PRINTS" id="PR00081">
    <property type="entry name" value="GDHRDH"/>
</dbReference>
<dbReference type="SUPFAM" id="SSF51735">
    <property type="entry name" value="NAD(P)-binding Rossmann-fold domains"/>
    <property type="match status" value="1"/>
</dbReference>
<accession>C8VI80</accession>
<accession>Q5B8A4</accession>